<gene>
    <name evidence="1" type="primary">rpsG</name>
    <name type="ordered locus">Mfl623</name>
</gene>
<accession>Q6F0J3</accession>
<proteinExistence type="inferred from homology"/>
<evidence type="ECO:0000255" key="1">
    <source>
        <dbReference type="HAMAP-Rule" id="MF_00480"/>
    </source>
</evidence>
<evidence type="ECO:0000305" key="2"/>
<name>RS7_MESFL</name>
<feature type="chain" id="PRO_0000124290" description="Small ribosomal subunit protein uS7">
    <location>
        <begin position="1"/>
        <end position="155"/>
    </location>
</feature>
<dbReference type="EMBL" id="AE017263">
    <property type="protein sequence ID" value="AAT75980.1"/>
    <property type="molecule type" value="Genomic_DNA"/>
</dbReference>
<dbReference type="RefSeq" id="WP_011183520.1">
    <property type="nucleotide sequence ID" value="NC_006055.1"/>
</dbReference>
<dbReference type="RefSeq" id="YP_053864.1">
    <property type="nucleotide sequence ID" value="NC_006055.1"/>
</dbReference>
<dbReference type="SMR" id="Q6F0J3"/>
<dbReference type="STRING" id="265311.Mfl623"/>
<dbReference type="PaxDb" id="265311-Mfl623"/>
<dbReference type="EnsemblBacteria" id="AAT75980">
    <property type="protein sequence ID" value="AAT75980"/>
    <property type="gene ID" value="Mfl623"/>
</dbReference>
<dbReference type="GeneID" id="2897753"/>
<dbReference type="KEGG" id="mfl:Mfl623"/>
<dbReference type="PATRIC" id="fig|265311.5.peg.626"/>
<dbReference type="eggNOG" id="COG0049">
    <property type="taxonomic scope" value="Bacteria"/>
</dbReference>
<dbReference type="HOGENOM" id="CLU_072226_1_1_14"/>
<dbReference type="OrthoDB" id="9807653at2"/>
<dbReference type="Proteomes" id="UP000006647">
    <property type="component" value="Chromosome"/>
</dbReference>
<dbReference type="GO" id="GO:0015935">
    <property type="term" value="C:small ribosomal subunit"/>
    <property type="evidence" value="ECO:0007669"/>
    <property type="project" value="InterPro"/>
</dbReference>
<dbReference type="GO" id="GO:0019843">
    <property type="term" value="F:rRNA binding"/>
    <property type="evidence" value="ECO:0007669"/>
    <property type="project" value="UniProtKB-UniRule"/>
</dbReference>
<dbReference type="GO" id="GO:0003735">
    <property type="term" value="F:structural constituent of ribosome"/>
    <property type="evidence" value="ECO:0007669"/>
    <property type="project" value="InterPro"/>
</dbReference>
<dbReference type="GO" id="GO:0000049">
    <property type="term" value="F:tRNA binding"/>
    <property type="evidence" value="ECO:0007669"/>
    <property type="project" value="UniProtKB-UniRule"/>
</dbReference>
<dbReference type="GO" id="GO:0006412">
    <property type="term" value="P:translation"/>
    <property type="evidence" value="ECO:0007669"/>
    <property type="project" value="UniProtKB-UniRule"/>
</dbReference>
<dbReference type="CDD" id="cd14869">
    <property type="entry name" value="uS7_Bacteria"/>
    <property type="match status" value="1"/>
</dbReference>
<dbReference type="FunFam" id="1.10.455.10:FF:000001">
    <property type="entry name" value="30S ribosomal protein S7"/>
    <property type="match status" value="1"/>
</dbReference>
<dbReference type="Gene3D" id="1.10.455.10">
    <property type="entry name" value="Ribosomal protein S7 domain"/>
    <property type="match status" value="1"/>
</dbReference>
<dbReference type="HAMAP" id="MF_00480_B">
    <property type="entry name" value="Ribosomal_uS7_B"/>
    <property type="match status" value="1"/>
</dbReference>
<dbReference type="InterPro" id="IPR000235">
    <property type="entry name" value="Ribosomal_uS7"/>
</dbReference>
<dbReference type="InterPro" id="IPR005717">
    <property type="entry name" value="Ribosomal_uS7_bac/org-type"/>
</dbReference>
<dbReference type="InterPro" id="IPR020606">
    <property type="entry name" value="Ribosomal_uS7_CS"/>
</dbReference>
<dbReference type="InterPro" id="IPR023798">
    <property type="entry name" value="Ribosomal_uS7_dom"/>
</dbReference>
<dbReference type="InterPro" id="IPR036823">
    <property type="entry name" value="Ribosomal_uS7_dom_sf"/>
</dbReference>
<dbReference type="NCBIfam" id="TIGR01029">
    <property type="entry name" value="rpsG_bact"/>
    <property type="match status" value="1"/>
</dbReference>
<dbReference type="PANTHER" id="PTHR11205">
    <property type="entry name" value="RIBOSOMAL PROTEIN S7"/>
    <property type="match status" value="1"/>
</dbReference>
<dbReference type="Pfam" id="PF00177">
    <property type="entry name" value="Ribosomal_S7"/>
    <property type="match status" value="1"/>
</dbReference>
<dbReference type="PIRSF" id="PIRSF002122">
    <property type="entry name" value="RPS7p_RPS7a_RPS5e_RPS7o"/>
    <property type="match status" value="1"/>
</dbReference>
<dbReference type="SUPFAM" id="SSF47973">
    <property type="entry name" value="Ribosomal protein S7"/>
    <property type="match status" value="1"/>
</dbReference>
<dbReference type="PROSITE" id="PS00052">
    <property type="entry name" value="RIBOSOMAL_S7"/>
    <property type="match status" value="1"/>
</dbReference>
<comment type="function">
    <text evidence="1">One of the primary rRNA binding proteins, it binds directly to 16S rRNA where it nucleates assembly of the head domain of the 30S subunit. Is located at the subunit interface close to the decoding center, probably blocks exit of the E-site tRNA.</text>
</comment>
<comment type="subunit">
    <text evidence="1">Part of the 30S ribosomal subunit. Contacts proteins S9 and S11.</text>
</comment>
<comment type="similarity">
    <text evidence="1">Belongs to the universal ribosomal protein uS7 family.</text>
</comment>
<reference key="1">
    <citation type="submission" date="2004-06" db="EMBL/GenBank/DDBJ databases">
        <authorList>
            <person name="Birren B.W."/>
            <person name="Stange-Thomann N."/>
            <person name="Hafez N."/>
            <person name="DeCaprio D."/>
            <person name="Fisher S."/>
            <person name="Butler J."/>
            <person name="Elkins T."/>
            <person name="Kodira C.D."/>
            <person name="Major J."/>
            <person name="Wang S."/>
            <person name="Nicol R."/>
            <person name="Nusbaum C."/>
        </authorList>
    </citation>
    <scope>NUCLEOTIDE SEQUENCE [LARGE SCALE GENOMIC DNA]</scope>
    <source>
        <strain>ATCC 33453 / NBRC 100688 / NCTC 11704 / L1</strain>
    </source>
</reference>
<organism>
    <name type="scientific">Mesoplasma florum (strain ATCC 33453 / NBRC 100688 / NCTC 11704 / L1)</name>
    <name type="common">Acholeplasma florum</name>
    <dbReference type="NCBI Taxonomy" id="265311"/>
    <lineage>
        <taxon>Bacteria</taxon>
        <taxon>Bacillati</taxon>
        <taxon>Mycoplasmatota</taxon>
        <taxon>Mollicutes</taxon>
        <taxon>Entomoplasmatales</taxon>
        <taxon>Entomoplasmataceae</taxon>
        <taxon>Mesoplasma</taxon>
    </lineage>
</organism>
<protein>
    <recommendedName>
        <fullName evidence="1">Small ribosomal subunit protein uS7</fullName>
    </recommendedName>
    <alternativeName>
        <fullName evidence="2">30S ribosomal protein S7</fullName>
    </alternativeName>
</protein>
<sequence>MRKNRAEKRDVLADPIYNSKLVTRAINKIMLDGKRGTAQTIIYDAFDIIKEKTGEEPIEIFNKAIENIKPHLELKVRRIGGANYQVPVEVSDERQVTLALRWLINYARLRNEKVMTVKLANEIIDASNNMGGSVKKREDTHKMAEANKAFAHYRW</sequence>
<keyword id="KW-1185">Reference proteome</keyword>
<keyword id="KW-0687">Ribonucleoprotein</keyword>
<keyword id="KW-0689">Ribosomal protein</keyword>
<keyword id="KW-0694">RNA-binding</keyword>
<keyword id="KW-0699">rRNA-binding</keyword>
<keyword id="KW-0820">tRNA-binding</keyword>